<reference key="1">
    <citation type="journal article" date="2009" name="Genome Res.">
        <title>Newly introduced genomic prophage islands are critical determinants of in vivo competitiveness in the Liverpool epidemic strain of Pseudomonas aeruginosa.</title>
        <authorList>
            <person name="Winstanley C."/>
            <person name="Langille M.G.I."/>
            <person name="Fothergill J.L."/>
            <person name="Kukavica-Ibrulj I."/>
            <person name="Paradis-Bleau C."/>
            <person name="Sanschagrin F."/>
            <person name="Thomson N.R."/>
            <person name="Winsor G.L."/>
            <person name="Quail M.A."/>
            <person name="Lennard N."/>
            <person name="Bignell A."/>
            <person name="Clarke L."/>
            <person name="Seeger K."/>
            <person name="Saunders D."/>
            <person name="Harris D."/>
            <person name="Parkhill J."/>
            <person name="Hancock R.E.W."/>
            <person name="Brinkman F.S.L."/>
            <person name="Levesque R.C."/>
        </authorList>
    </citation>
    <scope>NUCLEOTIDE SEQUENCE [LARGE SCALE GENOMIC DNA]</scope>
    <source>
        <strain>LESB58</strain>
    </source>
</reference>
<dbReference type="EC" id="3.5.2.3" evidence="1"/>
<dbReference type="EMBL" id="FM209186">
    <property type="protein sequence ID" value="CAW26234.1"/>
    <property type="molecule type" value="Genomic_DNA"/>
</dbReference>
<dbReference type="RefSeq" id="WP_003092068.1">
    <property type="nucleotide sequence ID" value="NC_011770.1"/>
</dbReference>
<dbReference type="SMR" id="B7UVV3"/>
<dbReference type="KEGG" id="pag:PLES_15061"/>
<dbReference type="HOGENOM" id="CLU_041558_1_0_6"/>
<dbReference type="UniPathway" id="UPA00070">
    <property type="reaction ID" value="UER00117"/>
</dbReference>
<dbReference type="GO" id="GO:0005829">
    <property type="term" value="C:cytosol"/>
    <property type="evidence" value="ECO:0007669"/>
    <property type="project" value="TreeGrafter"/>
</dbReference>
<dbReference type="GO" id="GO:0004151">
    <property type="term" value="F:dihydroorotase activity"/>
    <property type="evidence" value="ECO:0007669"/>
    <property type="project" value="UniProtKB-UniRule"/>
</dbReference>
<dbReference type="GO" id="GO:0008270">
    <property type="term" value="F:zinc ion binding"/>
    <property type="evidence" value="ECO:0007669"/>
    <property type="project" value="UniProtKB-UniRule"/>
</dbReference>
<dbReference type="GO" id="GO:0006207">
    <property type="term" value="P:'de novo' pyrimidine nucleobase biosynthetic process"/>
    <property type="evidence" value="ECO:0007669"/>
    <property type="project" value="TreeGrafter"/>
</dbReference>
<dbReference type="GO" id="GO:0044205">
    <property type="term" value="P:'de novo' UMP biosynthetic process"/>
    <property type="evidence" value="ECO:0007669"/>
    <property type="project" value="UniProtKB-UniRule"/>
</dbReference>
<dbReference type="CDD" id="cd01294">
    <property type="entry name" value="DHOase"/>
    <property type="match status" value="1"/>
</dbReference>
<dbReference type="FunFam" id="3.20.20.140:FF:000006">
    <property type="entry name" value="Dihydroorotase"/>
    <property type="match status" value="1"/>
</dbReference>
<dbReference type="Gene3D" id="3.20.20.140">
    <property type="entry name" value="Metal-dependent hydrolases"/>
    <property type="match status" value="1"/>
</dbReference>
<dbReference type="HAMAP" id="MF_00219">
    <property type="entry name" value="PyrC_classII"/>
    <property type="match status" value="1"/>
</dbReference>
<dbReference type="InterPro" id="IPR006680">
    <property type="entry name" value="Amidohydro-rel"/>
</dbReference>
<dbReference type="InterPro" id="IPR004721">
    <property type="entry name" value="DHOdimr"/>
</dbReference>
<dbReference type="InterPro" id="IPR002195">
    <property type="entry name" value="Dihydroorotase_CS"/>
</dbReference>
<dbReference type="InterPro" id="IPR032466">
    <property type="entry name" value="Metal_Hydrolase"/>
</dbReference>
<dbReference type="NCBIfam" id="TIGR00856">
    <property type="entry name" value="pyrC_dimer"/>
    <property type="match status" value="1"/>
</dbReference>
<dbReference type="PANTHER" id="PTHR43137">
    <property type="entry name" value="DIHYDROOROTASE"/>
    <property type="match status" value="1"/>
</dbReference>
<dbReference type="PANTHER" id="PTHR43137:SF1">
    <property type="entry name" value="DIHYDROOROTASE"/>
    <property type="match status" value="1"/>
</dbReference>
<dbReference type="Pfam" id="PF01979">
    <property type="entry name" value="Amidohydro_1"/>
    <property type="match status" value="1"/>
</dbReference>
<dbReference type="PIRSF" id="PIRSF001237">
    <property type="entry name" value="DHOdimr"/>
    <property type="match status" value="1"/>
</dbReference>
<dbReference type="SUPFAM" id="SSF51556">
    <property type="entry name" value="Metallo-dependent hydrolases"/>
    <property type="match status" value="1"/>
</dbReference>
<dbReference type="PROSITE" id="PS00482">
    <property type="entry name" value="DIHYDROOROTASE_1"/>
    <property type="match status" value="1"/>
</dbReference>
<dbReference type="PROSITE" id="PS00483">
    <property type="entry name" value="DIHYDROOROTASE_2"/>
    <property type="match status" value="1"/>
</dbReference>
<sequence length="348" mass="38377">MSDRLTLLRPDDWHIHLRDGAALANTVGDAARTFGRAIVMPNLVPPVRNAAEADAYRQRILAARPAASRFEPLMVLYLTDRTSAEEIRTAKASGFVHAAKLYPAGATTNSDSGVTRIDNIFEALEAMAEVGMPLLVHGEVTRAEVDVFDREKQFIDEHLRRVVERFPTLKVVFEHITTGDAAQFVREAPANVGATITAHHLLYNRNHMLVGGIRPHFYCLPILKRNTHQEALLDAAVSGNPKFFLGTDSAPHARHAKEAACGCAGCYSAYAAIELYAEAFEQRNALDKLEGFASLHGPDFYGLPRNTDRITLVREEWQAPASLPFGDFDVVPLRAGETLRWKLLEAGA</sequence>
<protein>
    <recommendedName>
        <fullName evidence="1">Dihydroorotase</fullName>
        <shortName evidence="1">DHOase</shortName>
        <ecNumber evidence="1">3.5.2.3</ecNumber>
    </recommendedName>
</protein>
<accession>B7UVV3</accession>
<organism>
    <name type="scientific">Pseudomonas aeruginosa (strain LESB58)</name>
    <dbReference type="NCBI Taxonomy" id="557722"/>
    <lineage>
        <taxon>Bacteria</taxon>
        <taxon>Pseudomonadati</taxon>
        <taxon>Pseudomonadota</taxon>
        <taxon>Gammaproteobacteria</taxon>
        <taxon>Pseudomonadales</taxon>
        <taxon>Pseudomonadaceae</taxon>
        <taxon>Pseudomonas</taxon>
    </lineage>
</organism>
<gene>
    <name evidence="1" type="primary">pyrC</name>
    <name type="ordered locus">PLES_15061</name>
</gene>
<proteinExistence type="inferred from homology"/>
<comment type="function">
    <text evidence="1">Catalyzes the reversible cyclization of carbamoyl aspartate to dihydroorotate.</text>
</comment>
<comment type="catalytic activity">
    <reaction evidence="1">
        <text>(S)-dihydroorotate + H2O = N-carbamoyl-L-aspartate + H(+)</text>
        <dbReference type="Rhea" id="RHEA:24296"/>
        <dbReference type="ChEBI" id="CHEBI:15377"/>
        <dbReference type="ChEBI" id="CHEBI:15378"/>
        <dbReference type="ChEBI" id="CHEBI:30864"/>
        <dbReference type="ChEBI" id="CHEBI:32814"/>
        <dbReference type="EC" id="3.5.2.3"/>
    </reaction>
</comment>
<comment type="cofactor">
    <cofactor evidence="1">
        <name>Zn(2+)</name>
        <dbReference type="ChEBI" id="CHEBI:29105"/>
    </cofactor>
    <text evidence="1">Binds 2 Zn(2+) ions per subunit.</text>
</comment>
<comment type="pathway">
    <text evidence="1">Pyrimidine metabolism; UMP biosynthesis via de novo pathway; (S)-dihydroorotate from bicarbonate: step 3/3.</text>
</comment>
<comment type="subunit">
    <text evidence="1">Homodimer.</text>
</comment>
<comment type="similarity">
    <text evidence="1">Belongs to the metallo-dependent hydrolases superfamily. DHOase family. Class II DHOase subfamily.</text>
</comment>
<feature type="chain" id="PRO_1000193079" description="Dihydroorotase">
    <location>
        <begin position="1"/>
        <end position="348"/>
    </location>
</feature>
<feature type="active site" evidence="1">
    <location>
        <position position="248"/>
    </location>
</feature>
<feature type="binding site" evidence="1">
    <location>
        <position position="14"/>
    </location>
    <ligand>
        <name>Zn(2+)</name>
        <dbReference type="ChEBI" id="CHEBI:29105"/>
        <label>1</label>
    </ligand>
</feature>
<feature type="binding site" evidence="1">
    <location>
        <begin position="16"/>
        <end position="18"/>
    </location>
    <ligand>
        <name>substrate</name>
    </ligand>
</feature>
<feature type="binding site" evidence="1">
    <location>
        <position position="16"/>
    </location>
    <ligand>
        <name>Zn(2+)</name>
        <dbReference type="ChEBI" id="CHEBI:29105"/>
        <label>1</label>
    </ligand>
</feature>
<feature type="binding site" evidence="1">
    <location>
        <position position="42"/>
    </location>
    <ligand>
        <name>substrate</name>
    </ligand>
</feature>
<feature type="binding site" description="via carbamate group" evidence="1">
    <location>
        <position position="100"/>
    </location>
    <ligand>
        <name>Zn(2+)</name>
        <dbReference type="ChEBI" id="CHEBI:29105"/>
        <label>1</label>
    </ligand>
</feature>
<feature type="binding site" description="via carbamate group" evidence="1">
    <location>
        <position position="100"/>
    </location>
    <ligand>
        <name>Zn(2+)</name>
        <dbReference type="ChEBI" id="CHEBI:29105"/>
        <label>2</label>
    </ligand>
</feature>
<feature type="binding site" evidence="1">
    <location>
        <position position="137"/>
    </location>
    <ligand>
        <name>substrate</name>
    </ligand>
</feature>
<feature type="binding site" evidence="1">
    <location>
        <position position="137"/>
    </location>
    <ligand>
        <name>Zn(2+)</name>
        <dbReference type="ChEBI" id="CHEBI:29105"/>
        <label>2</label>
    </ligand>
</feature>
<feature type="binding site" evidence="1">
    <location>
        <position position="175"/>
    </location>
    <ligand>
        <name>Zn(2+)</name>
        <dbReference type="ChEBI" id="CHEBI:29105"/>
        <label>2</label>
    </ligand>
</feature>
<feature type="binding site" evidence="1">
    <location>
        <position position="220"/>
    </location>
    <ligand>
        <name>substrate</name>
    </ligand>
</feature>
<feature type="binding site" evidence="1">
    <location>
        <position position="248"/>
    </location>
    <ligand>
        <name>Zn(2+)</name>
        <dbReference type="ChEBI" id="CHEBI:29105"/>
        <label>1</label>
    </ligand>
</feature>
<feature type="binding site" evidence="1">
    <location>
        <position position="252"/>
    </location>
    <ligand>
        <name>substrate</name>
    </ligand>
</feature>
<feature type="binding site" evidence="1">
    <location>
        <position position="264"/>
    </location>
    <ligand>
        <name>substrate</name>
    </ligand>
</feature>
<feature type="modified residue" description="N6-carboxylysine" evidence="1">
    <location>
        <position position="100"/>
    </location>
</feature>
<name>PYRC_PSEA8</name>
<keyword id="KW-0378">Hydrolase</keyword>
<keyword id="KW-0479">Metal-binding</keyword>
<keyword id="KW-0665">Pyrimidine biosynthesis</keyword>
<keyword id="KW-0862">Zinc</keyword>
<evidence type="ECO:0000255" key="1">
    <source>
        <dbReference type="HAMAP-Rule" id="MF_00219"/>
    </source>
</evidence>